<dbReference type="EC" id="6.3.1.1" evidence="1"/>
<dbReference type="EMBL" id="CP001407">
    <property type="protein sequence ID" value="ACO27522.1"/>
    <property type="molecule type" value="Genomic_DNA"/>
</dbReference>
<dbReference type="RefSeq" id="WP_000284908.1">
    <property type="nucleotide sequence ID" value="NZ_CP009318.1"/>
</dbReference>
<dbReference type="SMR" id="C1EPH2"/>
<dbReference type="GeneID" id="69532735"/>
<dbReference type="KEGG" id="bcx:BCA_1814"/>
<dbReference type="PATRIC" id="fig|572264.18.peg.1756"/>
<dbReference type="UniPathway" id="UPA00134">
    <property type="reaction ID" value="UER00194"/>
</dbReference>
<dbReference type="Proteomes" id="UP000002210">
    <property type="component" value="Chromosome"/>
</dbReference>
<dbReference type="GO" id="GO:0005829">
    <property type="term" value="C:cytosol"/>
    <property type="evidence" value="ECO:0007669"/>
    <property type="project" value="TreeGrafter"/>
</dbReference>
<dbReference type="GO" id="GO:0004071">
    <property type="term" value="F:aspartate-ammonia ligase activity"/>
    <property type="evidence" value="ECO:0007669"/>
    <property type="project" value="UniProtKB-UniRule"/>
</dbReference>
<dbReference type="GO" id="GO:0005524">
    <property type="term" value="F:ATP binding"/>
    <property type="evidence" value="ECO:0007669"/>
    <property type="project" value="UniProtKB-UniRule"/>
</dbReference>
<dbReference type="GO" id="GO:0140096">
    <property type="term" value="F:catalytic activity, acting on a protein"/>
    <property type="evidence" value="ECO:0007669"/>
    <property type="project" value="UniProtKB-ARBA"/>
</dbReference>
<dbReference type="GO" id="GO:0016740">
    <property type="term" value="F:transferase activity"/>
    <property type="evidence" value="ECO:0007669"/>
    <property type="project" value="UniProtKB-ARBA"/>
</dbReference>
<dbReference type="GO" id="GO:0070981">
    <property type="term" value="P:L-asparagine biosynthetic process"/>
    <property type="evidence" value="ECO:0007669"/>
    <property type="project" value="UniProtKB-UniRule"/>
</dbReference>
<dbReference type="CDD" id="cd00645">
    <property type="entry name" value="AsnA"/>
    <property type="match status" value="1"/>
</dbReference>
<dbReference type="Gene3D" id="3.30.930.10">
    <property type="entry name" value="Bira Bifunctional Protein, Domain 2"/>
    <property type="match status" value="1"/>
</dbReference>
<dbReference type="HAMAP" id="MF_00555">
    <property type="entry name" value="AsnA"/>
    <property type="match status" value="1"/>
</dbReference>
<dbReference type="InterPro" id="IPR006195">
    <property type="entry name" value="aa-tRNA-synth_II"/>
</dbReference>
<dbReference type="InterPro" id="IPR045864">
    <property type="entry name" value="aa-tRNA-synth_II/BPL/LPL"/>
</dbReference>
<dbReference type="InterPro" id="IPR004618">
    <property type="entry name" value="AsnA"/>
</dbReference>
<dbReference type="NCBIfam" id="TIGR00669">
    <property type="entry name" value="asnA"/>
    <property type="match status" value="1"/>
</dbReference>
<dbReference type="PANTHER" id="PTHR30073">
    <property type="entry name" value="ASPARTATE--AMMONIA LIGASE"/>
    <property type="match status" value="1"/>
</dbReference>
<dbReference type="PANTHER" id="PTHR30073:SF5">
    <property type="entry name" value="ASPARTATE--AMMONIA LIGASE"/>
    <property type="match status" value="1"/>
</dbReference>
<dbReference type="Pfam" id="PF03590">
    <property type="entry name" value="AsnA"/>
    <property type="match status" value="1"/>
</dbReference>
<dbReference type="PIRSF" id="PIRSF001555">
    <property type="entry name" value="Asp_ammon_ligase"/>
    <property type="match status" value="1"/>
</dbReference>
<dbReference type="SUPFAM" id="SSF55681">
    <property type="entry name" value="Class II aaRS and biotin synthetases"/>
    <property type="match status" value="1"/>
</dbReference>
<dbReference type="PROSITE" id="PS50862">
    <property type="entry name" value="AA_TRNA_LIGASE_II"/>
    <property type="match status" value="1"/>
</dbReference>
<feature type="chain" id="PRO_1000146689" description="Aspartate--ammonia ligase">
    <location>
        <begin position="1"/>
        <end position="327"/>
    </location>
</feature>
<name>ASNA_BACC3</name>
<gene>
    <name evidence="1" type="primary">asnA</name>
    <name type="ordered locus">BCA_1814</name>
</gene>
<proteinExistence type="inferred from homology"/>
<accession>C1EPH2</accession>
<sequence length="327" mass="38087">MYQSLMTVRETQIAIKEVKTFFEDQLAKRLELFRVSAPLFVTKKSGLNDHLNGVERPIEFDMLHSGEELEIVHSLAKWKRFALHEYGYEAGEGLYTNMNAIRRDEELDATHSIYVDQWDWEKIVQKEWRTVDYLQKTVLTIYGIFKDLEDHLFEKYPFLGKYLPEEIVFVTSQELEDKYPELTPKDREHAIAKEHGAVFIIGIGDALRSGEKHDGRAADYDDWKLNGDILFWHPVLQSSFELSSMGIRVDSKSLDEQLTKTGEDFKREYDFHKGILEDVLPLTIGGGIGQSRMCMYFLRKAHIGEVQSSVWPDDLREACKKENIHLF</sequence>
<comment type="catalytic activity">
    <reaction evidence="1">
        <text>L-aspartate + NH4(+) + ATP = L-asparagine + AMP + diphosphate + H(+)</text>
        <dbReference type="Rhea" id="RHEA:11372"/>
        <dbReference type="ChEBI" id="CHEBI:15378"/>
        <dbReference type="ChEBI" id="CHEBI:28938"/>
        <dbReference type="ChEBI" id="CHEBI:29991"/>
        <dbReference type="ChEBI" id="CHEBI:30616"/>
        <dbReference type="ChEBI" id="CHEBI:33019"/>
        <dbReference type="ChEBI" id="CHEBI:58048"/>
        <dbReference type="ChEBI" id="CHEBI:456215"/>
        <dbReference type="EC" id="6.3.1.1"/>
    </reaction>
</comment>
<comment type="pathway">
    <text evidence="1">Amino-acid biosynthesis; L-asparagine biosynthesis; L-asparagine from L-aspartate (ammonia route): step 1/1.</text>
</comment>
<comment type="subcellular location">
    <subcellularLocation>
        <location evidence="1">Cytoplasm</location>
    </subcellularLocation>
</comment>
<comment type="similarity">
    <text evidence="1">Belongs to the class-II aminoacyl-tRNA synthetase family. AsnA subfamily.</text>
</comment>
<organism>
    <name type="scientific">Bacillus cereus (strain 03BB102)</name>
    <dbReference type="NCBI Taxonomy" id="572264"/>
    <lineage>
        <taxon>Bacteria</taxon>
        <taxon>Bacillati</taxon>
        <taxon>Bacillota</taxon>
        <taxon>Bacilli</taxon>
        <taxon>Bacillales</taxon>
        <taxon>Bacillaceae</taxon>
        <taxon>Bacillus</taxon>
        <taxon>Bacillus cereus group</taxon>
    </lineage>
</organism>
<evidence type="ECO:0000255" key="1">
    <source>
        <dbReference type="HAMAP-Rule" id="MF_00555"/>
    </source>
</evidence>
<reference key="1">
    <citation type="submission" date="2009-02" db="EMBL/GenBank/DDBJ databases">
        <title>Genome sequence of Bacillus cereus 03BB102.</title>
        <authorList>
            <person name="Dodson R.J."/>
            <person name="Jackson P."/>
            <person name="Munk A.C."/>
            <person name="Brettin T."/>
            <person name="Bruce D."/>
            <person name="Detter C."/>
            <person name="Tapia R."/>
            <person name="Han C."/>
            <person name="Sutton G."/>
            <person name="Sims D."/>
        </authorList>
    </citation>
    <scope>NUCLEOTIDE SEQUENCE [LARGE SCALE GENOMIC DNA]</scope>
    <source>
        <strain>03BB102</strain>
    </source>
</reference>
<keyword id="KW-0028">Amino-acid biosynthesis</keyword>
<keyword id="KW-0061">Asparagine biosynthesis</keyword>
<keyword id="KW-0067">ATP-binding</keyword>
<keyword id="KW-0963">Cytoplasm</keyword>
<keyword id="KW-0436">Ligase</keyword>
<keyword id="KW-0547">Nucleotide-binding</keyword>
<protein>
    <recommendedName>
        <fullName evidence="1">Aspartate--ammonia ligase</fullName>
        <ecNumber evidence="1">6.3.1.1</ecNumber>
    </recommendedName>
    <alternativeName>
        <fullName evidence="1">Asparagine synthetase A</fullName>
    </alternativeName>
</protein>